<proteinExistence type="inferred from homology"/>
<dbReference type="EMBL" id="AF324500">
    <property type="protein sequence ID" value="AAG49580.1"/>
    <property type="molecule type" value="Genomic_DNA"/>
</dbReference>
<dbReference type="SMR" id="Q9AMJ9"/>
<dbReference type="GO" id="GO:0005737">
    <property type="term" value="C:cytoplasm"/>
    <property type="evidence" value="ECO:0007669"/>
    <property type="project" value="UniProtKB-SubCell"/>
</dbReference>
<dbReference type="GO" id="GO:0005524">
    <property type="term" value="F:ATP binding"/>
    <property type="evidence" value="ECO:0007669"/>
    <property type="project" value="InterPro"/>
</dbReference>
<dbReference type="GO" id="GO:0046872">
    <property type="term" value="F:metal ion binding"/>
    <property type="evidence" value="ECO:0007669"/>
    <property type="project" value="TreeGrafter"/>
</dbReference>
<dbReference type="GO" id="GO:0044183">
    <property type="term" value="F:protein folding chaperone"/>
    <property type="evidence" value="ECO:0007669"/>
    <property type="project" value="InterPro"/>
</dbReference>
<dbReference type="GO" id="GO:0051087">
    <property type="term" value="F:protein-folding chaperone binding"/>
    <property type="evidence" value="ECO:0007669"/>
    <property type="project" value="TreeGrafter"/>
</dbReference>
<dbReference type="GO" id="GO:0051082">
    <property type="term" value="F:unfolded protein binding"/>
    <property type="evidence" value="ECO:0007669"/>
    <property type="project" value="TreeGrafter"/>
</dbReference>
<dbReference type="GO" id="GO:0051085">
    <property type="term" value="P:chaperone cofactor-dependent protein refolding"/>
    <property type="evidence" value="ECO:0007669"/>
    <property type="project" value="TreeGrafter"/>
</dbReference>
<dbReference type="CDD" id="cd00320">
    <property type="entry name" value="cpn10"/>
    <property type="match status" value="1"/>
</dbReference>
<dbReference type="FunFam" id="2.30.33.40:FF:000001">
    <property type="entry name" value="10 kDa chaperonin"/>
    <property type="match status" value="1"/>
</dbReference>
<dbReference type="Gene3D" id="2.30.33.40">
    <property type="entry name" value="GroES chaperonin"/>
    <property type="match status" value="1"/>
</dbReference>
<dbReference type="HAMAP" id="MF_00580">
    <property type="entry name" value="CH10"/>
    <property type="match status" value="1"/>
</dbReference>
<dbReference type="InterPro" id="IPR020818">
    <property type="entry name" value="Chaperonin_GroES"/>
</dbReference>
<dbReference type="InterPro" id="IPR037124">
    <property type="entry name" value="Chaperonin_GroES_sf"/>
</dbReference>
<dbReference type="InterPro" id="IPR011032">
    <property type="entry name" value="GroES-like_sf"/>
</dbReference>
<dbReference type="NCBIfam" id="NF001530">
    <property type="entry name" value="PRK00364.1-6"/>
    <property type="match status" value="1"/>
</dbReference>
<dbReference type="NCBIfam" id="NF001531">
    <property type="entry name" value="PRK00364.2-2"/>
    <property type="match status" value="1"/>
</dbReference>
<dbReference type="PANTHER" id="PTHR10772">
    <property type="entry name" value="10 KDA HEAT SHOCK PROTEIN"/>
    <property type="match status" value="1"/>
</dbReference>
<dbReference type="PANTHER" id="PTHR10772:SF58">
    <property type="entry name" value="CO-CHAPERONIN GROES"/>
    <property type="match status" value="1"/>
</dbReference>
<dbReference type="Pfam" id="PF00166">
    <property type="entry name" value="Cpn10"/>
    <property type="match status" value="1"/>
</dbReference>
<dbReference type="PRINTS" id="PR00297">
    <property type="entry name" value="CHAPERONIN10"/>
</dbReference>
<dbReference type="SMART" id="SM00883">
    <property type="entry name" value="Cpn10"/>
    <property type="match status" value="1"/>
</dbReference>
<dbReference type="SUPFAM" id="SSF50129">
    <property type="entry name" value="GroES-like"/>
    <property type="match status" value="1"/>
</dbReference>
<accession>Q9AMJ9</accession>
<sequence length="102" mass="11086">MAAVSLSVSTVKPLGDRVFVKVSASEKRPRRLYFPDTAKEKPQVGEVVALGAGKRNDDGSRQELEVKVGDLLLYSKYAGTDVKLGTEEYVLLSEKDILAMVG</sequence>
<feature type="chain" id="PRO_0000174685" description="Co-chaperonin GroES">
    <location>
        <begin position="1"/>
        <end position="102"/>
    </location>
</feature>
<organism>
    <name type="scientific">Anabaena sp. (strain L31)</name>
    <dbReference type="NCBI Taxonomy" id="29412"/>
    <lineage>
        <taxon>Bacteria</taxon>
        <taxon>Bacillati</taxon>
        <taxon>Cyanobacteriota</taxon>
        <taxon>Cyanophyceae</taxon>
        <taxon>Nostocales</taxon>
        <taxon>Nostocaceae</taxon>
        <taxon>Anabaena</taxon>
    </lineage>
</organism>
<reference key="1">
    <citation type="submission" date="2000-11" db="EMBL/GenBank/DDBJ databases">
        <title>Complete groESL operon of Anabaena sp. strain L-31.</title>
        <authorList>
            <person name="Rajaram H."/>
            <person name="Apte S.K."/>
            <person name="Wiegert T."/>
            <person name="Schumann W."/>
        </authorList>
    </citation>
    <scope>NUCLEOTIDE SEQUENCE [GENOMIC DNA]</scope>
</reference>
<evidence type="ECO:0000255" key="1">
    <source>
        <dbReference type="HAMAP-Rule" id="MF_00580"/>
    </source>
</evidence>
<protein>
    <recommendedName>
        <fullName evidence="1">Co-chaperonin GroES</fullName>
    </recommendedName>
    <alternativeName>
        <fullName evidence="1">10 kDa chaperonin</fullName>
    </alternativeName>
    <alternativeName>
        <fullName evidence="1">Chaperonin-10</fullName>
        <shortName evidence="1">Cpn10</shortName>
    </alternativeName>
</protein>
<comment type="function">
    <text evidence="1">Together with the chaperonin GroEL, plays an essential role in assisting protein folding. The GroEL-GroES system forms a nano-cage that allows encapsulation of the non-native substrate proteins and provides a physical environment optimized to promote and accelerate protein folding. GroES binds to the apical surface of the GroEL ring, thereby capping the opening of the GroEL channel.</text>
</comment>
<comment type="subunit">
    <text evidence="1">Heptamer of 7 subunits arranged in a ring. Interacts with the chaperonin GroEL.</text>
</comment>
<comment type="subcellular location">
    <subcellularLocation>
        <location evidence="1">Cytoplasm</location>
    </subcellularLocation>
</comment>
<comment type="similarity">
    <text evidence="1">Belongs to the GroES chaperonin family.</text>
</comment>
<keyword id="KW-0143">Chaperone</keyword>
<keyword id="KW-0963">Cytoplasm</keyword>
<gene>
    <name evidence="1" type="primary">groES</name>
    <name evidence="1" type="synonym">groS</name>
</gene>
<name>CH10_ANASL</name>